<reference key="1">
    <citation type="journal article" date="2006" name="J. Bacteriol.">
        <title>Pathogenomic sequence analysis of Bacillus cereus and Bacillus thuringiensis isolates closely related to Bacillus anthracis.</title>
        <authorList>
            <person name="Han C.S."/>
            <person name="Xie G."/>
            <person name="Challacombe J.F."/>
            <person name="Altherr M.R."/>
            <person name="Bhotika S.S."/>
            <person name="Bruce D."/>
            <person name="Campbell C.S."/>
            <person name="Campbell M.L."/>
            <person name="Chen J."/>
            <person name="Chertkov O."/>
            <person name="Cleland C."/>
            <person name="Dimitrijevic M."/>
            <person name="Doggett N.A."/>
            <person name="Fawcett J.J."/>
            <person name="Glavina T."/>
            <person name="Goodwin L.A."/>
            <person name="Hill K.K."/>
            <person name="Hitchcock P."/>
            <person name="Jackson P.J."/>
            <person name="Keim P."/>
            <person name="Kewalramani A.R."/>
            <person name="Longmire J."/>
            <person name="Lucas S."/>
            <person name="Malfatti S."/>
            <person name="McMurry K."/>
            <person name="Meincke L.J."/>
            <person name="Misra M."/>
            <person name="Moseman B.L."/>
            <person name="Mundt M."/>
            <person name="Munk A.C."/>
            <person name="Okinaka R.T."/>
            <person name="Parson-Quintana B."/>
            <person name="Reilly L.P."/>
            <person name="Richardson P."/>
            <person name="Robinson D.L."/>
            <person name="Rubin E."/>
            <person name="Saunders E."/>
            <person name="Tapia R."/>
            <person name="Tesmer J.G."/>
            <person name="Thayer N."/>
            <person name="Thompson L.S."/>
            <person name="Tice H."/>
            <person name="Ticknor L.O."/>
            <person name="Wills P.L."/>
            <person name="Brettin T.S."/>
            <person name="Gilna P."/>
        </authorList>
    </citation>
    <scope>NUCLEOTIDE SEQUENCE [LARGE SCALE GENOMIC DNA]</scope>
    <source>
        <strain>ZK / E33L</strain>
    </source>
</reference>
<proteinExistence type="inferred from homology"/>
<comment type="function">
    <text evidence="1">Involved in the gluconeogenesis. Catalyzes stereospecifically the conversion of dihydroxyacetone phosphate (DHAP) to D-glyceraldehyde-3-phosphate (G3P).</text>
</comment>
<comment type="catalytic activity">
    <reaction evidence="1">
        <text>D-glyceraldehyde 3-phosphate = dihydroxyacetone phosphate</text>
        <dbReference type="Rhea" id="RHEA:18585"/>
        <dbReference type="ChEBI" id="CHEBI:57642"/>
        <dbReference type="ChEBI" id="CHEBI:59776"/>
        <dbReference type="EC" id="5.3.1.1"/>
    </reaction>
</comment>
<comment type="pathway">
    <text evidence="1">Carbohydrate biosynthesis; gluconeogenesis.</text>
</comment>
<comment type="pathway">
    <text evidence="1">Carbohydrate degradation; glycolysis; D-glyceraldehyde 3-phosphate from glycerone phosphate: step 1/1.</text>
</comment>
<comment type="subunit">
    <text evidence="1">Homodimer.</text>
</comment>
<comment type="subcellular location">
    <subcellularLocation>
        <location evidence="1">Cytoplasm</location>
    </subcellularLocation>
</comment>
<comment type="similarity">
    <text evidence="1">Belongs to the triosephosphate isomerase family.</text>
</comment>
<evidence type="ECO:0000255" key="1">
    <source>
        <dbReference type="HAMAP-Rule" id="MF_00147"/>
    </source>
</evidence>
<name>TPIS_BACCZ</name>
<sequence length="251" mass="26468">MRKPIIAGNWKMNKTLSEAVSFVEEVKGQIPAASAVDAVVCSPALFLERLVAATEGTDLQVGAQNMHFEKNGAFTGEISPVALSDLKVGYVVLGHSERREMFAETDESVNKKTIAAFEHGLTPIVCCGETLEERESGKTFDLVAGQVTKALAGLTEEQVKATVIAYEPIWAIGTGKSSSSADANEVCAHIRKVVAEAVSPEAAEAVRIQYGGSVKPENIKEYMAQSDIDGALVGGASLEPASFLGLLGAVK</sequence>
<gene>
    <name evidence="1" type="primary">tpiA</name>
    <name type="ordered locus">BCE33L4826</name>
</gene>
<keyword id="KW-0963">Cytoplasm</keyword>
<keyword id="KW-0312">Gluconeogenesis</keyword>
<keyword id="KW-0324">Glycolysis</keyword>
<keyword id="KW-0413">Isomerase</keyword>
<keyword id="KW-0597">Phosphoprotein</keyword>
<organism>
    <name type="scientific">Bacillus cereus (strain ZK / E33L)</name>
    <dbReference type="NCBI Taxonomy" id="288681"/>
    <lineage>
        <taxon>Bacteria</taxon>
        <taxon>Bacillati</taxon>
        <taxon>Bacillota</taxon>
        <taxon>Bacilli</taxon>
        <taxon>Bacillales</taxon>
        <taxon>Bacillaceae</taxon>
        <taxon>Bacillus</taxon>
        <taxon>Bacillus cereus group</taxon>
    </lineage>
</organism>
<accession>Q631M0</accession>
<protein>
    <recommendedName>
        <fullName evidence="1">Triosephosphate isomerase</fullName>
        <shortName evidence="1">TIM</shortName>
        <shortName evidence="1">TPI</shortName>
        <ecNumber evidence="1">5.3.1.1</ecNumber>
    </recommendedName>
    <alternativeName>
        <fullName evidence="1">Triose-phosphate isomerase</fullName>
    </alternativeName>
</protein>
<dbReference type="EC" id="5.3.1.1" evidence="1"/>
<dbReference type="EMBL" id="CP000001">
    <property type="protein sequence ID" value="AAU15451.1"/>
    <property type="molecule type" value="Genomic_DNA"/>
</dbReference>
<dbReference type="RefSeq" id="WP_001231038.1">
    <property type="nucleotide sequence ID" value="NZ_CP009968.1"/>
</dbReference>
<dbReference type="SMR" id="Q631M0"/>
<dbReference type="GeneID" id="93005983"/>
<dbReference type="KEGG" id="bcz:BCE33L4826"/>
<dbReference type="PATRIC" id="fig|288681.22.peg.527"/>
<dbReference type="UniPathway" id="UPA00109">
    <property type="reaction ID" value="UER00189"/>
</dbReference>
<dbReference type="UniPathway" id="UPA00138"/>
<dbReference type="Proteomes" id="UP000002612">
    <property type="component" value="Chromosome"/>
</dbReference>
<dbReference type="GO" id="GO:0005829">
    <property type="term" value="C:cytosol"/>
    <property type="evidence" value="ECO:0007669"/>
    <property type="project" value="TreeGrafter"/>
</dbReference>
<dbReference type="GO" id="GO:0004807">
    <property type="term" value="F:triose-phosphate isomerase activity"/>
    <property type="evidence" value="ECO:0007669"/>
    <property type="project" value="UniProtKB-UniRule"/>
</dbReference>
<dbReference type="GO" id="GO:0006094">
    <property type="term" value="P:gluconeogenesis"/>
    <property type="evidence" value="ECO:0007669"/>
    <property type="project" value="UniProtKB-UniRule"/>
</dbReference>
<dbReference type="GO" id="GO:0046166">
    <property type="term" value="P:glyceraldehyde-3-phosphate biosynthetic process"/>
    <property type="evidence" value="ECO:0007669"/>
    <property type="project" value="TreeGrafter"/>
</dbReference>
<dbReference type="GO" id="GO:0019563">
    <property type="term" value="P:glycerol catabolic process"/>
    <property type="evidence" value="ECO:0007669"/>
    <property type="project" value="TreeGrafter"/>
</dbReference>
<dbReference type="GO" id="GO:0006096">
    <property type="term" value="P:glycolytic process"/>
    <property type="evidence" value="ECO:0007669"/>
    <property type="project" value="UniProtKB-UniRule"/>
</dbReference>
<dbReference type="CDD" id="cd00311">
    <property type="entry name" value="TIM"/>
    <property type="match status" value="1"/>
</dbReference>
<dbReference type="FunFam" id="3.20.20.70:FF:000016">
    <property type="entry name" value="Triosephosphate isomerase"/>
    <property type="match status" value="1"/>
</dbReference>
<dbReference type="Gene3D" id="3.20.20.70">
    <property type="entry name" value="Aldolase class I"/>
    <property type="match status" value="1"/>
</dbReference>
<dbReference type="HAMAP" id="MF_00147_B">
    <property type="entry name" value="TIM_B"/>
    <property type="match status" value="1"/>
</dbReference>
<dbReference type="InterPro" id="IPR013785">
    <property type="entry name" value="Aldolase_TIM"/>
</dbReference>
<dbReference type="InterPro" id="IPR035990">
    <property type="entry name" value="TIM_sf"/>
</dbReference>
<dbReference type="InterPro" id="IPR022896">
    <property type="entry name" value="TrioseP_Isoase_bac/euk"/>
</dbReference>
<dbReference type="InterPro" id="IPR000652">
    <property type="entry name" value="Triosephosphate_isomerase"/>
</dbReference>
<dbReference type="InterPro" id="IPR020861">
    <property type="entry name" value="Triosephosphate_isomerase_AS"/>
</dbReference>
<dbReference type="NCBIfam" id="TIGR00419">
    <property type="entry name" value="tim"/>
    <property type="match status" value="1"/>
</dbReference>
<dbReference type="PANTHER" id="PTHR21139">
    <property type="entry name" value="TRIOSEPHOSPHATE ISOMERASE"/>
    <property type="match status" value="1"/>
</dbReference>
<dbReference type="PANTHER" id="PTHR21139:SF42">
    <property type="entry name" value="TRIOSEPHOSPHATE ISOMERASE"/>
    <property type="match status" value="1"/>
</dbReference>
<dbReference type="Pfam" id="PF00121">
    <property type="entry name" value="TIM"/>
    <property type="match status" value="1"/>
</dbReference>
<dbReference type="SUPFAM" id="SSF51351">
    <property type="entry name" value="Triosephosphate isomerase (TIM)"/>
    <property type="match status" value="1"/>
</dbReference>
<dbReference type="PROSITE" id="PS00171">
    <property type="entry name" value="TIM_1"/>
    <property type="match status" value="1"/>
</dbReference>
<dbReference type="PROSITE" id="PS51440">
    <property type="entry name" value="TIM_2"/>
    <property type="match status" value="1"/>
</dbReference>
<feature type="chain" id="PRO_0000307426" description="Triosephosphate isomerase">
    <location>
        <begin position="1"/>
        <end position="251"/>
    </location>
</feature>
<feature type="active site" description="Electrophile" evidence="1">
    <location>
        <position position="95"/>
    </location>
</feature>
<feature type="active site" description="Proton acceptor" evidence="1">
    <location>
        <position position="167"/>
    </location>
</feature>
<feature type="binding site" evidence="1">
    <location>
        <begin position="9"/>
        <end position="11"/>
    </location>
    <ligand>
        <name>substrate</name>
    </ligand>
</feature>
<feature type="binding site" evidence="1">
    <location>
        <position position="173"/>
    </location>
    <ligand>
        <name>substrate</name>
    </ligand>
</feature>
<feature type="binding site" evidence="1">
    <location>
        <position position="213"/>
    </location>
    <ligand>
        <name>substrate</name>
    </ligand>
</feature>
<feature type="binding site" evidence="1">
    <location>
        <begin position="234"/>
        <end position="235"/>
    </location>
    <ligand>
        <name>substrate</name>
    </ligand>
</feature>
<feature type="modified residue" description="Phosphoserine" evidence="1">
    <location>
        <position position="213"/>
    </location>
</feature>